<reference key="1">
    <citation type="journal article" date="1998" name="Nature">
        <title>The complete genome of the hyperthermophilic bacterium Aquifex aeolicus.</title>
        <authorList>
            <person name="Deckert G."/>
            <person name="Warren P.V."/>
            <person name="Gaasterland T."/>
            <person name="Young W.G."/>
            <person name="Lenox A.L."/>
            <person name="Graham D.E."/>
            <person name="Overbeek R."/>
            <person name="Snead M.A."/>
            <person name="Keller M."/>
            <person name="Aujay M."/>
            <person name="Huber R."/>
            <person name="Feldman R.A."/>
            <person name="Short J.M."/>
            <person name="Olsen G.J."/>
            <person name="Swanson R.V."/>
        </authorList>
    </citation>
    <scope>NUCLEOTIDE SEQUENCE [LARGE SCALE GENOMIC DNA]</scope>
    <source>
        <strain>VF5</strain>
    </source>
</reference>
<accession>O67860</accession>
<evidence type="ECO:0000255" key="1"/>
<evidence type="ECO:0000305" key="2"/>
<gene>
    <name type="ordered locus">aq_2087</name>
</gene>
<protein>
    <recommendedName>
        <fullName>Uncharacterized protein aq_2087</fullName>
    </recommendedName>
</protein>
<dbReference type="EMBL" id="AE000657">
    <property type="protein sequence ID" value="AAC07833.1"/>
    <property type="molecule type" value="Genomic_DNA"/>
</dbReference>
<dbReference type="PIR" id="H70478">
    <property type="entry name" value="H70478"/>
</dbReference>
<dbReference type="RefSeq" id="NP_214429.1">
    <property type="nucleotide sequence ID" value="NC_000918.1"/>
</dbReference>
<dbReference type="RefSeq" id="WP_010881365.1">
    <property type="nucleotide sequence ID" value="NC_000918.1"/>
</dbReference>
<dbReference type="SMR" id="O67860"/>
<dbReference type="STRING" id="224324.aq_2087"/>
<dbReference type="EnsemblBacteria" id="AAC07833">
    <property type="protein sequence ID" value="AAC07833"/>
    <property type="gene ID" value="aq_2087"/>
</dbReference>
<dbReference type="KEGG" id="aae:aq_2087"/>
<dbReference type="eggNOG" id="COG3431">
    <property type="taxonomic scope" value="Bacteria"/>
</dbReference>
<dbReference type="HOGENOM" id="CLU_1472324_0_0_0"/>
<dbReference type="InParanoid" id="O67860"/>
<dbReference type="OrthoDB" id="74012at2"/>
<dbReference type="Proteomes" id="UP000000798">
    <property type="component" value="Chromosome"/>
</dbReference>
<dbReference type="GO" id="GO:0005886">
    <property type="term" value="C:plasma membrane"/>
    <property type="evidence" value="ECO:0007669"/>
    <property type="project" value="UniProtKB-SubCell"/>
</dbReference>
<dbReference type="InterPro" id="IPR020948">
    <property type="entry name" value="P_starv_induced_PsiE-like"/>
</dbReference>
<dbReference type="Pfam" id="PF06146">
    <property type="entry name" value="PsiE"/>
    <property type="match status" value="1"/>
</dbReference>
<organism>
    <name type="scientific">Aquifex aeolicus (strain VF5)</name>
    <dbReference type="NCBI Taxonomy" id="224324"/>
    <lineage>
        <taxon>Bacteria</taxon>
        <taxon>Pseudomonadati</taxon>
        <taxon>Aquificota</taxon>
        <taxon>Aquificia</taxon>
        <taxon>Aquificales</taxon>
        <taxon>Aquificaceae</taxon>
        <taxon>Aquifex</taxon>
    </lineage>
</organism>
<sequence>MKLLEKITSYEFICKMVDIYNKFVNFVAILMIPILMLTLLIAIAIIFYDLRLFVDYFLHGAVAEEYDKAFKLLVRNILNFFVLIELFKVFIDVLEFRRIRKRQIIEAGIVFVVREIILIVFEHRFTFWDLLGFGALLLALGLTYVLLEKSYMEYLKFEHREITKRERSERESLKEQRKGELKR</sequence>
<proteinExistence type="predicted"/>
<name>Y2087_AQUAE</name>
<comment type="subcellular location">
    <subcellularLocation>
        <location evidence="2">Cell membrane</location>
        <topology evidence="2">Multi-pass membrane protein</topology>
    </subcellularLocation>
</comment>
<keyword id="KW-1003">Cell membrane</keyword>
<keyword id="KW-0472">Membrane</keyword>
<keyword id="KW-1185">Reference proteome</keyword>
<keyword id="KW-0812">Transmembrane</keyword>
<keyword id="KW-1133">Transmembrane helix</keyword>
<feature type="chain" id="PRO_0000186969" description="Uncharacterized protein aq_2087">
    <location>
        <begin position="1"/>
        <end position="183"/>
    </location>
</feature>
<feature type="transmembrane region" description="Helical" evidence="1">
    <location>
        <begin position="26"/>
        <end position="48"/>
    </location>
</feature>
<feature type="transmembrane region" description="Helical" evidence="1">
    <location>
        <begin position="72"/>
        <end position="91"/>
    </location>
</feature>
<feature type="transmembrane region" description="Helical" evidence="1">
    <location>
        <begin position="104"/>
        <end position="121"/>
    </location>
</feature>
<feature type="transmembrane region" description="Helical" evidence="1">
    <location>
        <begin position="125"/>
        <end position="147"/>
    </location>
</feature>